<organism>
    <name type="scientific">Staphylococcus aureus (strain USA300 / TCH1516)</name>
    <dbReference type="NCBI Taxonomy" id="451516"/>
    <lineage>
        <taxon>Bacteria</taxon>
        <taxon>Bacillati</taxon>
        <taxon>Bacillota</taxon>
        <taxon>Bacilli</taxon>
        <taxon>Bacillales</taxon>
        <taxon>Staphylococcaceae</taxon>
        <taxon>Staphylococcus</taxon>
    </lineage>
</organism>
<name>PGK_STAAT</name>
<accession>A8Z1A1</accession>
<protein>
    <recommendedName>
        <fullName evidence="1">Phosphoglycerate kinase</fullName>
        <ecNumber evidence="1">2.7.2.3</ecNumber>
    </recommendedName>
</protein>
<evidence type="ECO:0000255" key="1">
    <source>
        <dbReference type="HAMAP-Rule" id="MF_00145"/>
    </source>
</evidence>
<gene>
    <name evidence="1" type="primary">pgk</name>
    <name type="ordered locus">USA300HOU_0803</name>
</gene>
<reference key="1">
    <citation type="journal article" date="2007" name="BMC Microbiol.">
        <title>Subtle genetic changes enhance virulence of methicillin resistant and sensitive Staphylococcus aureus.</title>
        <authorList>
            <person name="Highlander S.K."/>
            <person name="Hulten K.G."/>
            <person name="Qin X."/>
            <person name="Jiang H."/>
            <person name="Yerrapragada S."/>
            <person name="Mason E.O. Jr."/>
            <person name="Shang Y."/>
            <person name="Williams T.M."/>
            <person name="Fortunov R.M."/>
            <person name="Liu Y."/>
            <person name="Igboeli O."/>
            <person name="Petrosino J."/>
            <person name="Tirumalai M."/>
            <person name="Uzman A."/>
            <person name="Fox G.E."/>
            <person name="Cardenas A.M."/>
            <person name="Muzny D.M."/>
            <person name="Hemphill L."/>
            <person name="Ding Y."/>
            <person name="Dugan S."/>
            <person name="Blyth P.R."/>
            <person name="Buhay C.J."/>
            <person name="Dinh H.H."/>
            <person name="Hawes A.C."/>
            <person name="Holder M."/>
            <person name="Kovar C.L."/>
            <person name="Lee S.L."/>
            <person name="Liu W."/>
            <person name="Nazareth L.V."/>
            <person name="Wang Q."/>
            <person name="Zhou J."/>
            <person name="Kaplan S.L."/>
            <person name="Weinstock G.M."/>
        </authorList>
    </citation>
    <scope>NUCLEOTIDE SEQUENCE [LARGE SCALE GENOMIC DNA]</scope>
    <source>
        <strain>USA300 / TCH1516</strain>
    </source>
</reference>
<keyword id="KW-0067">ATP-binding</keyword>
<keyword id="KW-0963">Cytoplasm</keyword>
<keyword id="KW-0324">Glycolysis</keyword>
<keyword id="KW-0418">Kinase</keyword>
<keyword id="KW-0547">Nucleotide-binding</keyword>
<keyword id="KW-0808">Transferase</keyword>
<dbReference type="EC" id="2.7.2.3" evidence="1"/>
<dbReference type="EMBL" id="CP000730">
    <property type="protein sequence ID" value="ABX28824.1"/>
    <property type="molecule type" value="Genomic_DNA"/>
</dbReference>
<dbReference type="RefSeq" id="WP_001074749.1">
    <property type="nucleotide sequence ID" value="NC_010079.1"/>
</dbReference>
<dbReference type="SMR" id="A8Z1A1"/>
<dbReference type="KEGG" id="sax:USA300HOU_0803"/>
<dbReference type="HOGENOM" id="CLU_025427_0_2_9"/>
<dbReference type="UniPathway" id="UPA00109">
    <property type="reaction ID" value="UER00185"/>
</dbReference>
<dbReference type="GO" id="GO:0005829">
    <property type="term" value="C:cytosol"/>
    <property type="evidence" value="ECO:0007669"/>
    <property type="project" value="TreeGrafter"/>
</dbReference>
<dbReference type="GO" id="GO:0043531">
    <property type="term" value="F:ADP binding"/>
    <property type="evidence" value="ECO:0007669"/>
    <property type="project" value="TreeGrafter"/>
</dbReference>
<dbReference type="GO" id="GO:0005524">
    <property type="term" value="F:ATP binding"/>
    <property type="evidence" value="ECO:0007669"/>
    <property type="project" value="UniProtKB-KW"/>
</dbReference>
<dbReference type="GO" id="GO:0004618">
    <property type="term" value="F:phosphoglycerate kinase activity"/>
    <property type="evidence" value="ECO:0007669"/>
    <property type="project" value="UniProtKB-UniRule"/>
</dbReference>
<dbReference type="GO" id="GO:0006094">
    <property type="term" value="P:gluconeogenesis"/>
    <property type="evidence" value="ECO:0007669"/>
    <property type="project" value="TreeGrafter"/>
</dbReference>
<dbReference type="GO" id="GO:0006096">
    <property type="term" value="P:glycolytic process"/>
    <property type="evidence" value="ECO:0007669"/>
    <property type="project" value="UniProtKB-UniRule"/>
</dbReference>
<dbReference type="CDD" id="cd00318">
    <property type="entry name" value="Phosphoglycerate_kinase"/>
    <property type="match status" value="1"/>
</dbReference>
<dbReference type="FunFam" id="3.40.50.1260:FF:000001">
    <property type="entry name" value="Phosphoglycerate kinase"/>
    <property type="match status" value="1"/>
</dbReference>
<dbReference type="FunFam" id="3.40.50.1260:FF:000008">
    <property type="entry name" value="Phosphoglycerate kinase"/>
    <property type="match status" value="1"/>
</dbReference>
<dbReference type="Gene3D" id="3.40.50.1260">
    <property type="entry name" value="Phosphoglycerate kinase, N-terminal domain"/>
    <property type="match status" value="2"/>
</dbReference>
<dbReference type="HAMAP" id="MF_00145">
    <property type="entry name" value="Phosphoglyc_kinase"/>
    <property type="match status" value="1"/>
</dbReference>
<dbReference type="InterPro" id="IPR001576">
    <property type="entry name" value="Phosphoglycerate_kinase"/>
</dbReference>
<dbReference type="InterPro" id="IPR015911">
    <property type="entry name" value="Phosphoglycerate_kinase_CS"/>
</dbReference>
<dbReference type="InterPro" id="IPR015824">
    <property type="entry name" value="Phosphoglycerate_kinase_N"/>
</dbReference>
<dbReference type="InterPro" id="IPR036043">
    <property type="entry name" value="Phosphoglycerate_kinase_sf"/>
</dbReference>
<dbReference type="PANTHER" id="PTHR11406">
    <property type="entry name" value="PHOSPHOGLYCERATE KINASE"/>
    <property type="match status" value="1"/>
</dbReference>
<dbReference type="PANTHER" id="PTHR11406:SF23">
    <property type="entry name" value="PHOSPHOGLYCERATE KINASE 1, CHLOROPLASTIC-RELATED"/>
    <property type="match status" value="1"/>
</dbReference>
<dbReference type="Pfam" id="PF00162">
    <property type="entry name" value="PGK"/>
    <property type="match status" value="1"/>
</dbReference>
<dbReference type="PIRSF" id="PIRSF000724">
    <property type="entry name" value="Pgk"/>
    <property type="match status" value="1"/>
</dbReference>
<dbReference type="PRINTS" id="PR00477">
    <property type="entry name" value="PHGLYCKINASE"/>
</dbReference>
<dbReference type="SUPFAM" id="SSF53748">
    <property type="entry name" value="Phosphoglycerate kinase"/>
    <property type="match status" value="1"/>
</dbReference>
<dbReference type="PROSITE" id="PS00111">
    <property type="entry name" value="PGLYCERATE_KINASE"/>
    <property type="match status" value="1"/>
</dbReference>
<feature type="chain" id="PRO_1000076612" description="Phosphoglycerate kinase">
    <location>
        <begin position="1"/>
        <end position="396"/>
    </location>
</feature>
<feature type="binding site" evidence="1">
    <location>
        <begin position="21"/>
        <end position="23"/>
    </location>
    <ligand>
        <name>substrate</name>
    </ligand>
</feature>
<feature type="binding site" evidence="1">
    <location>
        <position position="36"/>
    </location>
    <ligand>
        <name>substrate</name>
    </ligand>
</feature>
<feature type="binding site" evidence="1">
    <location>
        <begin position="59"/>
        <end position="62"/>
    </location>
    <ligand>
        <name>substrate</name>
    </ligand>
</feature>
<feature type="binding site" evidence="1">
    <location>
        <position position="119"/>
    </location>
    <ligand>
        <name>substrate</name>
    </ligand>
</feature>
<feature type="binding site" evidence="1">
    <location>
        <position position="156"/>
    </location>
    <ligand>
        <name>substrate</name>
    </ligand>
</feature>
<feature type="binding site" evidence="1">
    <location>
        <position position="206"/>
    </location>
    <ligand>
        <name>ATP</name>
        <dbReference type="ChEBI" id="CHEBI:30616"/>
    </ligand>
</feature>
<feature type="binding site" evidence="1">
    <location>
        <position position="294"/>
    </location>
    <ligand>
        <name>ATP</name>
        <dbReference type="ChEBI" id="CHEBI:30616"/>
    </ligand>
</feature>
<feature type="binding site" evidence="1">
    <location>
        <position position="325"/>
    </location>
    <ligand>
        <name>ATP</name>
        <dbReference type="ChEBI" id="CHEBI:30616"/>
    </ligand>
</feature>
<feature type="binding site" evidence="1">
    <location>
        <begin position="352"/>
        <end position="355"/>
    </location>
    <ligand>
        <name>ATP</name>
        <dbReference type="ChEBI" id="CHEBI:30616"/>
    </ligand>
</feature>
<proteinExistence type="inferred from homology"/>
<comment type="catalytic activity">
    <reaction evidence="1">
        <text>(2R)-3-phosphoglycerate + ATP = (2R)-3-phospho-glyceroyl phosphate + ADP</text>
        <dbReference type="Rhea" id="RHEA:14801"/>
        <dbReference type="ChEBI" id="CHEBI:30616"/>
        <dbReference type="ChEBI" id="CHEBI:57604"/>
        <dbReference type="ChEBI" id="CHEBI:58272"/>
        <dbReference type="ChEBI" id="CHEBI:456216"/>
        <dbReference type="EC" id="2.7.2.3"/>
    </reaction>
</comment>
<comment type="pathway">
    <text evidence="1">Carbohydrate degradation; glycolysis; pyruvate from D-glyceraldehyde 3-phosphate: step 2/5.</text>
</comment>
<comment type="subunit">
    <text evidence="1">Monomer.</text>
</comment>
<comment type="subcellular location">
    <subcellularLocation>
        <location evidence="1">Cytoplasm</location>
    </subcellularLocation>
</comment>
<comment type="similarity">
    <text evidence="1">Belongs to the phosphoglycerate kinase family.</text>
</comment>
<sequence>MAKKIVSDLDLKGKTVLVRADFNVPLKDGEITNDNRIVQALPTIQYIIEQGGKIVLFSHLGKVKEESDKAKLTLRPVAEDLSKKLDKEVVFVPETRGEKLEAAIKDLKEGDVLLVENTRYEDLDGKKESKNDPELGKYWASLGDVFVNDAFGTAHREHASNVGISTHLETAAGFLMDKEIKFIGGVVNDPHKPVVAILGGAKVSDKINVIKNLVNIADKIIIGGGMAYTFLKAQGKEIGISLLEEDKIDFAKDLLEKHGDKIVLPVDTKVAKEFSNDAKITVVPSDSIPADQEGMDIGPNTVKLFADELEGAHTVVWNGPMGVFEFSNFAQGTIGVCKAIANLKDAITIIGGGDSAAAAISLGFENDFTHISTGGGASLEYLEGKELPGIKAINNK</sequence>